<organism>
    <name type="scientific">Nostoc sp. (strain PCC 7120 / SAG 25.82 / UTEX 2576)</name>
    <dbReference type="NCBI Taxonomy" id="103690"/>
    <lineage>
        <taxon>Bacteria</taxon>
        <taxon>Bacillati</taxon>
        <taxon>Cyanobacteriota</taxon>
        <taxon>Cyanophyceae</taxon>
        <taxon>Nostocales</taxon>
        <taxon>Nostocaceae</taxon>
        <taxon>Nostoc</taxon>
    </lineage>
</organism>
<comment type="function">
    <text evidence="1">This protein is located at the 30S-50S ribosomal subunit interface and may play a role in the structure and function of the aminoacyl-tRNA binding site.</text>
</comment>
<comment type="similarity">
    <text evidence="2">Belongs to the bacterial ribosomal protein bL19 family.</text>
</comment>
<comment type="sequence caution" evidence="2">
    <conflict type="erroneous initiation">
        <sequence resource="EMBL-CDS" id="BAB76996"/>
    </conflict>
</comment>
<protein>
    <recommendedName>
        <fullName evidence="2">Large ribosomal subunit protein bL19</fullName>
    </recommendedName>
    <alternativeName>
        <fullName>50S ribosomal protein L19</fullName>
    </alternativeName>
</protein>
<name>RL19_NOSS1</name>
<dbReference type="EMBL" id="BA000019">
    <property type="protein sequence ID" value="BAB76996.1"/>
    <property type="status" value="ALT_INIT"/>
    <property type="molecule type" value="Genomic_DNA"/>
</dbReference>
<dbReference type="PIR" id="AI2467">
    <property type="entry name" value="AI2467"/>
</dbReference>
<dbReference type="RefSeq" id="WP_044522592.1">
    <property type="nucleotide sequence ID" value="NZ_RSCN01000005.1"/>
</dbReference>
<dbReference type="SMR" id="Q8YLK1"/>
<dbReference type="STRING" id="103690.gene:10497357"/>
<dbReference type="KEGG" id="ana:alr5297"/>
<dbReference type="eggNOG" id="COG0335">
    <property type="taxonomic scope" value="Bacteria"/>
</dbReference>
<dbReference type="OrthoDB" id="9803541at2"/>
<dbReference type="Proteomes" id="UP000002483">
    <property type="component" value="Chromosome"/>
</dbReference>
<dbReference type="GO" id="GO:0022625">
    <property type="term" value="C:cytosolic large ribosomal subunit"/>
    <property type="evidence" value="ECO:0007669"/>
    <property type="project" value="TreeGrafter"/>
</dbReference>
<dbReference type="GO" id="GO:0003735">
    <property type="term" value="F:structural constituent of ribosome"/>
    <property type="evidence" value="ECO:0007669"/>
    <property type="project" value="InterPro"/>
</dbReference>
<dbReference type="GO" id="GO:0006412">
    <property type="term" value="P:translation"/>
    <property type="evidence" value="ECO:0007669"/>
    <property type="project" value="UniProtKB-UniRule"/>
</dbReference>
<dbReference type="FunFam" id="2.30.30.790:FF:000001">
    <property type="entry name" value="50S ribosomal protein L19"/>
    <property type="match status" value="1"/>
</dbReference>
<dbReference type="Gene3D" id="2.30.30.790">
    <property type="match status" value="1"/>
</dbReference>
<dbReference type="HAMAP" id="MF_00402">
    <property type="entry name" value="Ribosomal_bL19"/>
    <property type="match status" value="1"/>
</dbReference>
<dbReference type="InterPro" id="IPR001857">
    <property type="entry name" value="Ribosomal_bL19"/>
</dbReference>
<dbReference type="InterPro" id="IPR018257">
    <property type="entry name" value="Ribosomal_bL19_CS"/>
</dbReference>
<dbReference type="InterPro" id="IPR038657">
    <property type="entry name" value="Ribosomal_bL19_sf"/>
</dbReference>
<dbReference type="InterPro" id="IPR008991">
    <property type="entry name" value="Translation_prot_SH3-like_sf"/>
</dbReference>
<dbReference type="NCBIfam" id="TIGR01024">
    <property type="entry name" value="rplS_bact"/>
    <property type="match status" value="1"/>
</dbReference>
<dbReference type="PANTHER" id="PTHR15680:SF9">
    <property type="entry name" value="LARGE RIBOSOMAL SUBUNIT PROTEIN BL19M"/>
    <property type="match status" value="1"/>
</dbReference>
<dbReference type="PANTHER" id="PTHR15680">
    <property type="entry name" value="RIBOSOMAL PROTEIN L19"/>
    <property type="match status" value="1"/>
</dbReference>
<dbReference type="Pfam" id="PF01245">
    <property type="entry name" value="Ribosomal_L19"/>
    <property type="match status" value="1"/>
</dbReference>
<dbReference type="PIRSF" id="PIRSF002191">
    <property type="entry name" value="Ribosomal_L19"/>
    <property type="match status" value="1"/>
</dbReference>
<dbReference type="PRINTS" id="PR00061">
    <property type="entry name" value="RIBOSOMALL19"/>
</dbReference>
<dbReference type="SUPFAM" id="SSF50104">
    <property type="entry name" value="Translation proteins SH3-like domain"/>
    <property type="match status" value="1"/>
</dbReference>
<dbReference type="PROSITE" id="PS01015">
    <property type="entry name" value="RIBOSOMAL_L19"/>
    <property type="match status" value="1"/>
</dbReference>
<accession>Q8YLK1</accession>
<sequence>MSAQEIIRSIEAEQLKSNLPEIYIGDTVRVGVKIKEGEKYRVQPYEGVVIARRNGGINETITVRRVFQGVGVERVFLLHSPRIDNIKVLRRGKVRRAKLYYLRGRVGKATRIKQRFDRSL</sequence>
<gene>
    <name type="primary">rplS</name>
    <name type="synonym">rpl19</name>
    <name type="ordered locus">alr5297</name>
</gene>
<proteinExistence type="inferred from homology"/>
<evidence type="ECO:0000250" key="1"/>
<evidence type="ECO:0000305" key="2"/>
<reference key="1">
    <citation type="journal article" date="2001" name="DNA Res.">
        <title>Complete genomic sequence of the filamentous nitrogen-fixing cyanobacterium Anabaena sp. strain PCC 7120.</title>
        <authorList>
            <person name="Kaneko T."/>
            <person name="Nakamura Y."/>
            <person name="Wolk C.P."/>
            <person name="Kuritz T."/>
            <person name="Sasamoto S."/>
            <person name="Watanabe A."/>
            <person name="Iriguchi M."/>
            <person name="Ishikawa A."/>
            <person name="Kawashima K."/>
            <person name="Kimura T."/>
            <person name="Kishida Y."/>
            <person name="Kohara M."/>
            <person name="Matsumoto M."/>
            <person name="Matsuno A."/>
            <person name="Muraki A."/>
            <person name="Nakazaki N."/>
            <person name="Shimpo S."/>
            <person name="Sugimoto M."/>
            <person name="Takazawa M."/>
            <person name="Yamada M."/>
            <person name="Yasuda M."/>
            <person name="Tabata S."/>
        </authorList>
    </citation>
    <scope>NUCLEOTIDE SEQUENCE [LARGE SCALE GENOMIC DNA]</scope>
    <source>
        <strain>PCC 7120 / SAG 25.82 / UTEX 2576</strain>
    </source>
</reference>
<keyword id="KW-1185">Reference proteome</keyword>
<keyword id="KW-0687">Ribonucleoprotein</keyword>
<keyword id="KW-0689">Ribosomal protein</keyword>
<feature type="chain" id="PRO_0000163400" description="Large ribosomal subunit protein bL19">
    <location>
        <begin position="1"/>
        <end position="120"/>
    </location>
</feature>